<organism>
    <name type="scientific">Trypanosoma cruzi (strain CL Brener)</name>
    <dbReference type="NCBI Taxonomy" id="353153"/>
    <lineage>
        <taxon>Eukaryota</taxon>
        <taxon>Discoba</taxon>
        <taxon>Euglenozoa</taxon>
        <taxon>Kinetoplastea</taxon>
        <taxon>Metakinetoplastina</taxon>
        <taxon>Trypanosomatida</taxon>
        <taxon>Trypanosomatidae</taxon>
        <taxon>Trypanosoma</taxon>
        <taxon>Schizotrypanum</taxon>
    </lineage>
</organism>
<proteinExistence type="inferred from homology"/>
<sequence length="838" mass="94525">MGDIIRIKRHHYVHILDNNTNVTRCMVGPLVYTRKENERCLFNPKPCIVVPPRFYCIVQNPCVRDASGNPVIGENSSVMLRMGEEEICFEQEPFPLQPGEVLKREEEEWLFKLKLIPVNTGYHVRCLCDFTDKNSVLRRAGTEWLVEGPQTYVPRVEVEVLREVHAHIISPNTALHIRALVKFTDRTGVPREAGDLWTVRTVGAYLPAVEEDVIGTFQGITLTDTEAVHLEALSNFTDVYGKRRRAGERWLVTKEDASIHIPDVHEKVSGKVRAIVLNEKEYCVVQNPLGADGLNEFGRKEVRKGECRFFLHPQEELLGGMQPINVVSKDQALLLQAVDFFDDNGKIRRPGEKWMLHGPAEYIPDVNVRILEQRNLIALDKNEGIYVMNTTTGVVRVVIGKPYMLNENEVLWEKDLSPKVEELLAFANGCMSEGERNPSFKSTRVRHRVVRFNVQHNAAVQIYDYKQKKLRVVLGPNLVILSPDEEFTVVSLSGGKPKVPNLLHCLQLFLGPRFSSDRIVVETSDHARLELDLSYNWYFDVNREEPDAKIFSVPDFIGDCCKTIASRIRGAVAAEDFDSFHRNSAKIIRVAVFGRGENGEINTSLRFSANNLVVTNIDIQSVEPTDAKTRDSLQKSVQLAIEITTKSQEAAARHGKERKDQEARGKLERQKLLDKIEVERTKTKWLQLQAQSEAVQASGQSVAEAKAKAESLLIEVDSELKQAEMRAKAYRITAESELKKQKQKLELELEFTKRQNELDIMKARQIAETEAERVQRMVNAIGRETIVAVAQAGPEMQAKLLGGLGLKGYLITDGKSPVNLFNTAQGLIDAGSSAQEHS</sequence>
<keyword id="KW-0963">Cytoplasm</keyword>
<keyword id="KW-0539">Nucleus</keyword>
<keyword id="KW-0597">Phosphoprotein</keyword>
<keyword id="KW-1185">Reference proteome</keyword>
<keyword id="KW-0677">Repeat</keyword>
<keyword id="KW-0687">Ribonucleoprotein</keyword>
<dbReference type="EMBL" id="AAHK01001837">
    <property type="protein sequence ID" value="EAN83972.1"/>
    <property type="molecule type" value="Genomic_DNA"/>
</dbReference>
<dbReference type="RefSeq" id="XP_805823.1">
    <property type="nucleotide sequence ID" value="XM_800730.1"/>
</dbReference>
<dbReference type="SMR" id="Q4CUM2"/>
<dbReference type="STRING" id="353153.Q4CUM2"/>
<dbReference type="PaxDb" id="353153-Q4CUM2"/>
<dbReference type="EnsemblProtists" id="EAN83972">
    <property type="protein sequence ID" value="EAN83972"/>
    <property type="gene ID" value="Tc00.1047053510353.10"/>
</dbReference>
<dbReference type="GeneID" id="3535684"/>
<dbReference type="KEGG" id="tcr:510353.10"/>
<dbReference type="eggNOG" id="ENOG502QPP0">
    <property type="taxonomic scope" value="Eukaryota"/>
</dbReference>
<dbReference type="InParanoid" id="Q4CUM2"/>
<dbReference type="OMA" id="VTYRAPH"/>
<dbReference type="Proteomes" id="UP000002296">
    <property type="component" value="Unassembled WGS sequence"/>
</dbReference>
<dbReference type="GO" id="GO:0005737">
    <property type="term" value="C:cytoplasm"/>
    <property type="evidence" value="ECO:0007669"/>
    <property type="project" value="UniProtKB-SubCell"/>
</dbReference>
<dbReference type="GO" id="GO:0005634">
    <property type="term" value="C:nucleus"/>
    <property type="evidence" value="ECO:0007669"/>
    <property type="project" value="UniProtKB-SubCell"/>
</dbReference>
<dbReference type="GO" id="GO:1990904">
    <property type="term" value="C:ribonucleoprotein complex"/>
    <property type="evidence" value="ECO:0007669"/>
    <property type="project" value="UniProtKB-KW"/>
</dbReference>
<dbReference type="CDD" id="cd08825">
    <property type="entry name" value="MVP_shoulder"/>
    <property type="match status" value="1"/>
</dbReference>
<dbReference type="FunFam" id="2.30.30.620:FF:000002">
    <property type="entry name" value="Major vault protein"/>
    <property type="match status" value="1"/>
</dbReference>
<dbReference type="FunFam" id="2.30.30.560:FF:000002">
    <property type="entry name" value="Major vault protein-alpha"/>
    <property type="match status" value="1"/>
</dbReference>
<dbReference type="FunFam" id="2.30.30.570:FF:000002">
    <property type="entry name" value="Major vault protein-alpha"/>
    <property type="match status" value="1"/>
</dbReference>
<dbReference type="FunFam" id="2.30.30.550:FF:000001">
    <property type="entry name" value="major vault protein-like"/>
    <property type="match status" value="3"/>
</dbReference>
<dbReference type="FunFam" id="2.30.30.560:FF:000001">
    <property type="entry name" value="major vault protein-like"/>
    <property type="match status" value="1"/>
</dbReference>
<dbReference type="FunFam" id="2.30.30.570:FF:000001">
    <property type="entry name" value="major vault protein-like"/>
    <property type="match status" value="1"/>
</dbReference>
<dbReference type="FunFam" id="3.30.479.30:FF:000010">
    <property type="entry name" value="major vault protein-like"/>
    <property type="match status" value="1"/>
</dbReference>
<dbReference type="Gene3D" id="2.30.30.560">
    <property type="match status" value="2"/>
</dbReference>
<dbReference type="Gene3D" id="2.30.30.570">
    <property type="match status" value="2"/>
</dbReference>
<dbReference type="Gene3D" id="2.30.30.620">
    <property type="match status" value="1"/>
</dbReference>
<dbReference type="Gene3D" id="6.10.250.720">
    <property type="match status" value="1"/>
</dbReference>
<dbReference type="Gene3D" id="6.20.380.10">
    <property type="match status" value="1"/>
</dbReference>
<dbReference type="Gene3D" id="3.30.479.30">
    <property type="entry name" value="Band 7 domain"/>
    <property type="match status" value="1"/>
</dbReference>
<dbReference type="Gene3D" id="2.30.30.550">
    <property type="entry name" value="Major Vault Protein repeat"/>
    <property type="match status" value="4"/>
</dbReference>
<dbReference type="InterPro" id="IPR036013">
    <property type="entry name" value="Band_7/SPFH_dom_sf"/>
</dbReference>
<dbReference type="InterPro" id="IPR039059">
    <property type="entry name" value="MVP"/>
</dbReference>
<dbReference type="InterPro" id="IPR041139">
    <property type="entry name" value="MVP_rep_dom"/>
</dbReference>
<dbReference type="InterPro" id="IPR043023">
    <property type="entry name" value="MVP_rep_sf"/>
</dbReference>
<dbReference type="InterPro" id="IPR021870">
    <property type="entry name" value="MVP_shoulder"/>
</dbReference>
<dbReference type="InterPro" id="IPR041134">
    <property type="entry name" value="Vault_2"/>
</dbReference>
<dbReference type="InterPro" id="IPR043179">
    <property type="entry name" value="Vault_2_sf"/>
</dbReference>
<dbReference type="InterPro" id="IPR040989">
    <property type="entry name" value="Vault_3"/>
</dbReference>
<dbReference type="InterPro" id="IPR041136">
    <property type="entry name" value="Vault_4"/>
</dbReference>
<dbReference type="InterPro" id="IPR002499">
    <property type="entry name" value="Vault_N"/>
</dbReference>
<dbReference type="PANTHER" id="PTHR14165">
    <property type="entry name" value="MAJOR VAULT PROTEIN"/>
    <property type="match status" value="1"/>
</dbReference>
<dbReference type="PANTHER" id="PTHR14165:SF3">
    <property type="entry name" value="MAJOR VAULT PROTEIN"/>
    <property type="match status" value="1"/>
</dbReference>
<dbReference type="Pfam" id="PF11978">
    <property type="entry name" value="MVP_shoulder"/>
    <property type="match status" value="1"/>
</dbReference>
<dbReference type="Pfam" id="PF01505">
    <property type="entry name" value="Vault"/>
    <property type="match status" value="4"/>
</dbReference>
<dbReference type="Pfam" id="PF17794">
    <property type="entry name" value="Vault_2"/>
    <property type="match status" value="2"/>
</dbReference>
<dbReference type="Pfam" id="PF17795">
    <property type="entry name" value="Vault_3"/>
    <property type="match status" value="1"/>
</dbReference>
<dbReference type="Pfam" id="PF17796">
    <property type="entry name" value="Vault_4"/>
    <property type="match status" value="1"/>
</dbReference>
<dbReference type="PROSITE" id="PS51224">
    <property type="entry name" value="MVP"/>
    <property type="match status" value="7"/>
</dbReference>
<gene>
    <name type="ORF">Tc00.1047053510353.10</name>
</gene>
<accession>Q4CUM2</accession>
<feature type="chain" id="PRO_0000414612" description="Major vault protein">
    <location>
        <begin position="1"/>
        <end position="838"/>
    </location>
</feature>
<feature type="repeat" description="MVP 1" evidence="2">
    <location>
        <begin position="13"/>
        <end position="52"/>
    </location>
</feature>
<feature type="repeat" description="MVP 2" evidence="2">
    <location>
        <begin position="53"/>
        <end position="114"/>
    </location>
</feature>
<feature type="repeat" description="MVP 3" evidence="2">
    <location>
        <begin position="118"/>
        <end position="170"/>
    </location>
</feature>
<feature type="repeat" description="MVP 4" evidence="2">
    <location>
        <begin position="171"/>
        <end position="223"/>
    </location>
</feature>
<feature type="repeat" description="MVP 5" evidence="2">
    <location>
        <begin position="224"/>
        <end position="278"/>
    </location>
</feature>
<feature type="repeat" description="MVP 6" evidence="2">
    <location>
        <begin position="280"/>
        <end position="328"/>
    </location>
</feature>
<feature type="repeat" description="MVP 7" evidence="2">
    <location>
        <begin position="329"/>
        <end position="380"/>
    </location>
</feature>
<feature type="repeat" description="MVP 8" evidence="2">
    <location>
        <begin position="381"/>
        <end position="433"/>
    </location>
</feature>
<evidence type="ECO:0000250" key="1">
    <source>
        <dbReference type="UniProtKB" id="Q14764"/>
    </source>
</evidence>
<evidence type="ECO:0000255" key="2"/>
<evidence type="ECO:0000255" key="3">
    <source>
        <dbReference type="PROSITE-ProRule" id="PRU00571"/>
    </source>
</evidence>
<evidence type="ECO:0000312" key="4">
    <source>
        <dbReference type="EMBL" id="EAN83972.1"/>
    </source>
</evidence>
<protein>
    <recommendedName>
        <fullName>Major vault protein</fullName>
    </recommendedName>
</protein>
<comment type="function">
    <text evidence="1">Required for normal vault structure. Vaults are multi-subunit structures that may act as scaffolds for proteins involved in signal transduction. Vaults may also play a role in nucleo-cytoplasmic transport (By similarity).</text>
</comment>
<comment type="subunit">
    <text evidence="1">The vault ribonucleoprotein particle is a huge (400 A x 670 A) cage structure of 12.9 MDa. It consists of a dimer of half-vaults, with each half-vault comprising 39 identical major vault protein (MVP) chains, PARP4 and one or more vault RNAs (vRNAs) (By similarity).</text>
</comment>
<comment type="subcellular location">
    <subcellularLocation>
        <location evidence="1 3">Cytoplasm</location>
    </subcellularLocation>
    <subcellularLocation>
        <location evidence="1">Nucleus</location>
    </subcellularLocation>
</comment>
<name>MVP_TRYCC</name>
<reference evidence="4" key="1">
    <citation type="journal article" date="2005" name="Science">
        <title>The genome sequence of Trypanosoma cruzi, etiologic agent of Chagas disease.</title>
        <authorList>
            <person name="El-Sayed N.M.A."/>
            <person name="Myler P.J."/>
            <person name="Bartholomeu D.C."/>
            <person name="Nilsson D."/>
            <person name="Aggarwal G."/>
            <person name="Tran A.-N."/>
            <person name="Ghedin E."/>
            <person name="Worthey E.A."/>
            <person name="Delcher A.L."/>
            <person name="Blandin G."/>
            <person name="Westenberger S.J."/>
            <person name="Caler E."/>
            <person name="Cerqueira G.C."/>
            <person name="Branche C."/>
            <person name="Haas B."/>
            <person name="Anupama A."/>
            <person name="Arner E."/>
            <person name="Aslund L."/>
            <person name="Attipoe P."/>
            <person name="Bontempi E."/>
            <person name="Bringaud F."/>
            <person name="Burton P."/>
            <person name="Cadag E."/>
            <person name="Campbell D.A."/>
            <person name="Carrington M."/>
            <person name="Crabtree J."/>
            <person name="Darban H."/>
            <person name="da Silveira J.F."/>
            <person name="de Jong P."/>
            <person name="Edwards K."/>
            <person name="Englund P.T."/>
            <person name="Fazelina G."/>
            <person name="Feldblyum T."/>
            <person name="Ferella M."/>
            <person name="Frasch A.C."/>
            <person name="Gull K."/>
            <person name="Horn D."/>
            <person name="Hou L."/>
            <person name="Huang Y."/>
            <person name="Kindlund E."/>
            <person name="Klingbeil M."/>
            <person name="Kluge S."/>
            <person name="Koo H."/>
            <person name="Lacerda D."/>
            <person name="Levin M.J."/>
            <person name="Lorenzi H."/>
            <person name="Louie T."/>
            <person name="Machado C.R."/>
            <person name="McCulloch R."/>
            <person name="McKenna A."/>
            <person name="Mizuno Y."/>
            <person name="Mottram J.C."/>
            <person name="Nelson S."/>
            <person name="Ochaya S."/>
            <person name="Osoegawa K."/>
            <person name="Pai G."/>
            <person name="Parsons M."/>
            <person name="Pentony M."/>
            <person name="Pettersson U."/>
            <person name="Pop M."/>
            <person name="Ramirez J.L."/>
            <person name="Rinta J."/>
            <person name="Robertson L."/>
            <person name="Salzberg S.L."/>
            <person name="Sanchez D.O."/>
            <person name="Seyler A."/>
            <person name="Sharma R."/>
            <person name="Shetty J."/>
            <person name="Simpson A.J."/>
            <person name="Sisk E."/>
            <person name="Tammi M.T."/>
            <person name="Tarleton R."/>
            <person name="Teixeira S."/>
            <person name="Van Aken S."/>
            <person name="Vogt C."/>
            <person name="Ward P.N."/>
            <person name="Wickstead B."/>
            <person name="Wortman J."/>
            <person name="White O."/>
            <person name="Fraser C.M."/>
            <person name="Stuart K.D."/>
            <person name="Andersson B."/>
        </authorList>
    </citation>
    <scope>NUCLEOTIDE SEQUENCE [LARGE SCALE GENOMIC DNA]</scope>
    <source>
        <strain evidence="4">CL Brener</strain>
    </source>
</reference>